<sequence>MASACGAPGPGGALGSQAPSWYHRDLSRAAAEELLARAGRDGSFLVRDSESVAGAFALCVLYQKHVHTYRILPDGEDFLAVQTSQGVPVRRFQTLGELIGLYAQPNQGLVCALLLPVEGEREPDPPDDRDASDGEDEKPPLPPRSGSTSISAPTGPSSPLPAPETPTAPAAESAPNGLSTVSHDYLKGSYGLDLEAVRGGASHLPHLTRTLATSCRRLHSEVDKVLSGLEILSKVFDQQSSPMVTRLLQQQNLPQTGEQELESLVLKLSVLKDFLSGIQKKALKALQDMSSTAPPAPQPSTRKAKTIPVQAFEVKLDVTLGDLTKIGKSQKFTLSVDVEGGRLVLLRRQRDSQEDWTTFTHDRIRQLIKSQRVQNKLGVVFEKEKDRTQRKDFIFVSARKREAFCQLLQLMKNKHSKQDEPDMISVFIGTWNMGSVPPPKNVTSWFTSKGLGKTLDEVTVTIPHDIYVFGTQENSVGDREWLDLLRGGLKELTDLDYRPIAMQSLWNIKVAVLVKPEHENRISHVSTSSVKTGIANTLGNKGAVGVSFMFNGTSFGFVNCHLTSGNEKTARRNQNYLDILRLLSLGDRQLNAFDISLRFTHLFWFGDLNYRLDMDIQEILNYISRKEFEPLLRVDQLNLEREKHKVFLRFSEEEISFPPTYRYERGSRDTYAWHKQKPTGVRTNVPSWCDRILWKSYPETHIICNSYGCTDDIVTSDHSPVFGTFEVGVTSQFISKKGLSKTSDQAYIEFESIEAIVKTASRTKFFIEFYSTCLEEYKKSFENDAQSSDNINFLKVQWSSRQLPTLKPILADIEYLQDQHLLLTVKSMDGYESYGECVVALKSMIGSTAQQFLTFLSHRGEETGNIRGSMKVRVPTERLGTRERLYEWISIDKDEAGAKSKAPSVSRGSQEPRSGSRKPAFTEASCPLSRLFEEPEKPPPTGRPPAPPRAAPREEPLTPRLKPEGAPEPEGVAAPPPKNSFNNPAYYVLEGVPHQLLPPEPPSPARAPVPSATKNKVAITVPAPQLGHHRHPRVGEGSSSDEESGGTLPPPDFPPPPLPDSAIFLPPSLDPLPGPVVRGRGGAEARGPPPPKAHPRPPLPPGPSPASTFLGEVASGDDRSCSVLQMAKTLSEVDYAPAGPARSALLPGPLELQPPRGLPSDYGRPLSFPPPRIRESIQEDLAEEAPCLQGGRASGLGEAGMSAWLRAIGLERYEEGLVHNGWDDLEFLSDITEEDLEEAGVQDPAHKRLLLDTLQLSK</sequence>
<proteinExistence type="evidence at protein level"/>
<comment type="function">
    <text evidence="2 3 5 10 12 14 15 17 18 21 23 25 26 31 32 35">Phosphatidylinositol (PtdIns) phosphatase that specifically hydrolyzes the 5-phosphate of phosphatidylinositol-3,4,5-trisphosphate (PtdIns(3,4,5)P3) to produce PtdIns(3,4)P2, thereby negatively regulating the PI3K (phosphoinositide 3-kinase) pathways (PubMed:16824732). Required for correct mitotic spindle orientation and therefore progression of mitosis (By similarity). Plays a central role in regulation of PI3K-dependent insulin signaling, although the precise molecular mechanisms and signaling pathways remain unclear (PubMed:9660833). While overexpression reduces both insulin-stimulated MAP kinase and Akt activation, its absence does not affect insulin signaling or GLUT4 trafficking (By similarity). Confers resistance to dietary obesity (By similarity). May act by regulating AKT2, but not AKT1, phosphorylation at the plasma membrane (By similarity). Part of a signaling pathway that regulates actin cytoskeleton remodeling (PubMed:11739414, PubMed:12676785). Required for the maintenance and dynamic remodeling of actin structures as well as in endocytosis, having a major impact on ligand-induced EGFR internalization and degradation (PubMed:15668240). Participates in regulation of cortical and submembraneous actin by hydrolyzing PtdIns(3,4,5)P3 thereby regulating membrane ruffling (PubMed:21624956). Regulates cell adhesion and cell spreading (PubMed:12235291). Required for HGF-mediated lamellipodium formation, cell scattering and spreading (PubMed:15735664). Acts as a negative regulator of EPHA2 receptor endocytosis by inhibiting via PI3K-dependent Rac1 activation (PubMed:17135240). Acts as a regulator of neuritogenesis by regulating PtdIns(3,4,5)P3 level and is required to form an initial protrusive pattern, and later, maintain proper neurite outgrowth (By similarity). Acts as a negative regulator of the FC-gamma-RIIA receptor (FCGR2A) (PubMed:12690104). Mediates signaling from the FC-gamma-RIIB receptor (FCGR2B), playing a central role in terminating signal transduction from activating immune/hematopoietic cell receptor systems (PubMed:11016922). Involved in EGF signaling pathway (PubMed:11349134). Upon stimulation by EGF, it is recruited by EGFR and dephosphorylates PtdIns(3,4,5)P3 (PubMed:11349134). Plays a negative role in regulating the PI3K-PKB pathway, possibly by inhibiting PKB activity (PubMed:11349134). Down-regulates Fc-gamma-R-mediated phagocytosis in macrophages independently of INPP5D/SHIP1 (By similarity). In macrophages, down-regulates NF-kappa-B-dependent gene transcription by regulating macrophage colony-stimulating factor (M-CSF)-induced signaling (By similarity). Plays a role in the localization of AURKA and NEDD9/HEF1 to the basolateral membrane at interphase in polarized cysts, thereby mediates cell cycle homeostasis, cell polarization and cilia assembly (By similarity). Additionally promotion of cilia growth is also facilitated by hydrolysis of (PtdIns(3,4,5)P3) to PtdIns(3,4)P2 (By similarity). Promotes formation of apical membrane-initiation sites during the initial stages of lumen formation via Rho family-induced actin filament organization and CTNNB1 localization to cell-cell contacts (By similarity). May also hydrolyze PtdIns(1,3,4,5)P4, and could thus affect the levels of the higher inositol polyphosphates like InsP6. Involved in endochondral ossification (PubMed:23273569).</text>
</comment>
<comment type="catalytic activity">
    <reaction evidence="9 25 35">
        <text>a 1,2-diacyl-sn-glycero-3-phospho-(1D-myo-inositol-3,4,5-trisphosphate) + H2O = a 1,2-diacyl-sn-glycero-3-phospho-(1D-myo-inositol-3,4-bisphosphate) + phosphate</text>
        <dbReference type="Rhea" id="RHEA:25528"/>
        <dbReference type="ChEBI" id="CHEBI:15377"/>
        <dbReference type="ChEBI" id="CHEBI:43474"/>
        <dbReference type="ChEBI" id="CHEBI:57658"/>
        <dbReference type="ChEBI" id="CHEBI:57836"/>
        <dbReference type="EC" id="3.1.3.86"/>
    </reaction>
    <physiologicalReaction direction="left-to-right" evidence="41">
        <dbReference type="Rhea" id="RHEA:25529"/>
    </physiologicalReaction>
</comment>
<comment type="catalytic activity">
    <reaction evidence="25">
        <text>1,2-dioctanoyl-sn-glycero-3-phospho-(1D-myo-inositol-3,4,5-trisphosphate) + H2O = 1,2-dioctanoyl-sn-glycero-3-phospho-(1D-myo-inositol-3,4-bisphosphate) + phosphate</text>
        <dbReference type="Rhea" id="RHEA:43548"/>
        <dbReference type="ChEBI" id="CHEBI:15377"/>
        <dbReference type="ChEBI" id="CHEBI:43474"/>
        <dbReference type="ChEBI" id="CHEBI:83416"/>
        <dbReference type="ChEBI" id="CHEBI:83417"/>
    </reaction>
    <physiologicalReaction direction="left-to-right" evidence="42">
        <dbReference type="Rhea" id="RHEA:43549"/>
    </physiologicalReaction>
</comment>
<comment type="catalytic activity">
    <reaction evidence="25">
        <text>1,2-dihexadecanoyl-sn-glycero-3-phospho-(1D-myo-inositol-3,4,5-trisphosphate) + H2O = 1,2-dihexadecanoyl-sn-glycero-3-phospho-(1D-myo-inositol-3,4-bisphosphate) + phosphate</text>
        <dbReference type="Rhea" id="RHEA:43556"/>
        <dbReference type="ChEBI" id="CHEBI:15377"/>
        <dbReference type="ChEBI" id="CHEBI:43474"/>
        <dbReference type="ChEBI" id="CHEBI:83420"/>
        <dbReference type="ChEBI" id="CHEBI:83422"/>
    </reaction>
    <physiologicalReaction direction="left-to-right" evidence="42">
        <dbReference type="Rhea" id="RHEA:43557"/>
    </physiologicalReaction>
</comment>
<comment type="activity regulation">
    <text evidence="25">Activated upon translocation to the sites of synthesis of PtdIns(3,4,5)P3 in the membrane. Enzymatic activity is enhanced in the presence of phosphatidylserine.</text>
</comment>
<comment type="subunit">
    <text evidence="2 3 9 10 11 12 14 16 17 18 23 24 26 28 30 35">Interacts with tyrosine phosphorylated form of SHC1 (PubMed:10194451, PubMed:11349134, PubMed:9660833). Interacts with EGFR (PubMed:11349134). Upon stimulation by the EGF signaling pathway, it forms a complex with SHC1 and EGFR (PubMed:11349134). Interacts with cytoskeletal protein SORBS3/vinexin, promoting its localization to the periphery of cells (PubMed:16302969). Forms a complex with filamin (FLNA or FLNB), actin, GPIb (GP1BA or GP1BB) that regulates cortical and submembraneous actin (PubMed:11739414, PubMed:12676785). Interacts with c-Met/MET, when c-Met/MET is phosphorylated on 'Tyr-1356' (PubMed:15735664). Interacts with p130Cas/BCAR1 (PubMed:11158326). Interacts with CENTD3/ARAP3 via its SAM domain (PubMed:17314030). Interacts with c-Cbl/CBL and CAP/SORBS1 (PubMed:12504111). Interacts with activated EPHA2 receptor (PubMed:17135240). Interacts with receptor FCGR2A (PubMed:12690104). Interacts with receptor FCGR2B (PubMed:11016922). Interacts with tyrosine kinase ABL1 (PubMed:10194451). Interacts with tyrosine kinase TEC (By similarity). Interacts with CSF1R (By similarity). Interacts (via N-terminus) with SH3YL1 (via SH3 domain) (PubMed:21624956). Interacts with FCRL6 (tyrosine phosphorylated form) (PubMed:20933011). Interacts (via SH2 domain) with tyrosine phosphorylated KLRC1 (via ITIM). Interacts with NEDD9/HEF1 (By similarity).</text>
</comment>
<comment type="interaction">
    <interactant intactId="EBI-1384248">
        <id>O15357</id>
    </interactant>
    <interactant intactId="EBI-608057">
        <id>P10275</id>
        <label>AR</label>
    </interactant>
    <organismsDiffer>false</organismsDiffer>
    <experiments>3</experiments>
</comment>
<comment type="interaction">
    <interactant intactId="EBI-1384248">
        <id>O15357</id>
    </interactant>
    <interactant intactId="EBI-702093">
        <id>P56945</id>
        <label>BCAR1</label>
    </interactant>
    <organismsDiffer>false</organismsDiffer>
    <experiments>2</experiments>
</comment>
<comment type="interaction">
    <interactant intactId="EBI-1384248">
        <id>O15357</id>
    </interactant>
    <interactant intactId="EBI-517684">
        <id>Q13480</id>
        <label>GAB1</label>
    </interactant>
    <organismsDiffer>false</organismsDiffer>
    <experiments>2</experiments>
</comment>
<comment type="interaction">
    <interactant intactId="EBI-1384248">
        <id>O15357</id>
    </interactant>
    <interactant intactId="EBI-743438">
        <id>Q8IV36</id>
        <label>HID1</label>
    </interactant>
    <organismsDiffer>false</organismsDiffer>
    <experiments>2</experiments>
</comment>
<comment type="interaction">
    <interactant intactId="EBI-1384248">
        <id>O15357</id>
    </interactant>
    <interactant intactId="EBI-8052395">
        <id>Q15811-2</id>
        <label>ITSN1</label>
    </interactant>
    <organismsDiffer>false</organismsDiffer>
    <experiments>9</experiments>
</comment>
<comment type="interaction">
    <interactant intactId="EBI-1384248">
        <id>O15357</id>
    </interactant>
    <interactant intactId="EBI-1039152">
        <id>P08581</id>
        <label>MET</label>
    </interactant>
    <organismsDiffer>false</organismsDiffer>
    <experiments>2</experiments>
</comment>
<comment type="interaction">
    <interactant intactId="EBI-1384248">
        <id>O15357</id>
    </interactant>
    <interactant intactId="EBI-750317">
        <id>Q99447</id>
        <label>PCYT2</label>
    </interactant>
    <organismsDiffer>false</organismsDiffer>
    <experiments>3</experiments>
</comment>
<comment type="interaction">
    <interactant intactId="EBI-1384248">
        <id>O15357</id>
    </interactant>
    <interactant intactId="EBI-433642">
        <id>Q9BX66</id>
        <label>SORBS1</label>
    </interactant>
    <organismsDiffer>false</organismsDiffer>
    <experiments>5</experiments>
</comment>
<comment type="interaction">
    <interactant intactId="EBI-1384248">
        <id>O15357</id>
    </interactant>
    <interactant intactId="EBI-1222953">
        <id>O60504-1</id>
        <label>SORBS3</label>
    </interactant>
    <organismsDiffer>false</organismsDiffer>
    <experiments>2</experiments>
</comment>
<comment type="interaction">
    <interactant intactId="EBI-1384248">
        <id>O15357</id>
    </interactant>
    <interactant intactId="EBI-2504267">
        <id>A0A061I5T4</id>
        <label>H671_4g13114</label>
    </interactant>
    <organismsDiffer>true</organismsDiffer>
    <experiments>2</experiments>
</comment>
<comment type="interaction">
    <interactant intactId="EBI-15963021">
        <id>O15357-1</id>
    </interactant>
    <interactant intactId="EBI-702104">
        <id>P29317</id>
        <label>EPHA2</label>
    </interactant>
    <organismsDiffer>false</organismsDiffer>
    <experiments>3</experiments>
</comment>
<comment type="subcellular location">
    <subcellularLocation>
        <location evidence="12">Cytoplasm</location>
        <location evidence="12">Cytosol</location>
    </subcellularLocation>
    <subcellularLocation>
        <location>Cytoplasm</location>
        <location>Cytoskeleton</location>
    </subcellularLocation>
    <subcellularLocation>
        <location evidence="14">Membrane</location>
        <topology>Peripheral membrane protein</topology>
    </subcellularLocation>
    <subcellularLocation>
        <location evidence="17">Cell projection</location>
        <location evidence="17">Filopodium</location>
    </subcellularLocation>
    <subcellularLocation>
        <location evidence="17">Cell projection</location>
        <location evidence="17">Lamellipodium</location>
    </subcellularLocation>
    <subcellularLocation>
        <location evidence="2">Basal cell membrane</location>
    </subcellularLocation>
    <subcellularLocation>
        <location evidence="1">Nucleus</location>
    </subcellularLocation>
    <subcellularLocation>
        <location evidence="1">Nucleus speckle</location>
    </subcellularLocation>
    <subcellularLocation>
        <location evidence="2">Cytoplasm</location>
        <location evidence="2">Cytoskeleton</location>
        <location evidence="2">Spindle pole</location>
    </subcellularLocation>
    <text evidence="14">Translocates to membrane ruffles when activated, translocation is probably due to different mechanisms depending on the stimulus and cell type (PubMed:11739414). Partly translocated via its SH2 domain which mediates interaction with tyrosine phosphorylated receptors such as the FC-gamma-RIIB receptor (FCGR2B). Tyrosine phosphorylation may also participate in membrane localization. Insulin specifically stimulates its redistribution from the cytosol to the plasma membrane. Recruited to the membrane following M-CSF stimulation. In activated spreading platelets, localizes with actin at filopodia, lamellipodia and the central actin ring.</text>
</comment>
<comment type="alternative products">
    <event type="alternative splicing"/>
    <isoform>
        <id>O15357-1</id>
        <name>1</name>
        <sequence type="displayed"/>
    </isoform>
    <isoform>
        <id>O15357-2</id>
        <name>2</name>
        <sequence type="described" ref="VSP_027985"/>
    </isoform>
</comment>
<comment type="tissue specificity">
    <text evidence="17 18 33 34 35">Widely expressed, most prominently in skeletal muscle, heart and brain. Present in platelets. Expressed in transformed myeloid cells and in primary macrophages, but not in peripheral blood monocytes.</text>
</comment>
<comment type="induction">
    <text evidence="18">By bacterial lipopolysaccharides (LPS).</text>
</comment>
<comment type="domain">
    <text evidence="11 18">The SH2 domain interacts with tyrosine phosphorylated forms of proteins such as SHC1 or FCGR2A (PubMed:12690104). It also mediates the interaction with p130Cas/BCAR1 (PubMed:11158326).</text>
</comment>
<comment type="domain">
    <text evidence="4">The NPXY sequence motif found in many tyrosine-phosphorylated proteins is required for the specific binding of the PID domain.</text>
</comment>
<comment type="PTM">
    <text evidence="9 11 12 13 15 18 27 35">Tyrosine phosphorylated by the members of the SRC family after exposure to a diverse array of extracellular stimuli such as insulin, growth factors such as EGF or PDGF, chemokines, integrin ligands and hypertonic and oxidative stress. May be phosphorylated upon IgG receptor FCGR2B-binding. Phosphorylated at Tyr-986 following cell attachment and spreading. Phosphorylated at Tyr-1162 following EGF signaling pathway stimulation. Phosphorylated at Thr-958 in response to PDGF.</text>
</comment>
<comment type="disease">
    <text evidence="19 29">Genetic variations in INPPL1 may be a cause of susceptibility to metabolic syndrome. Metabolic syndrome is characterized by diabetes, insulin resistance, hypertension, and hypertriglyceridemia is absent.</text>
</comment>
<comment type="disease" evidence="32">
    <disease id="DI-03691">
        <name>Opsismodysplasia</name>
        <acronym>OPSMD</acronym>
        <description>A rare skeletal dysplasia involving delayed bone maturation. Clinical signs observed at birth include short limbs, small hands and feet, relative macrocephaly with a large anterior fontanel, and characteristic craniofacial abnormalities including a prominent brow, depressed nasal bridge, a small anteverted nose, and a relatively long philtrum. Death secondary to respiratory failure during the first few years of life has been reported, but there can be long-term survival. Typical radiographic findings include shortened long bones with very delayed epiphyseal ossification, severe platyspondyly, metaphyseal cupping, and characteristic abnormalities of the metacarpals and phalanges.</description>
        <dbReference type="MIM" id="258480"/>
    </disease>
    <text>The disease is caused by variants affecting the gene represented in this entry.</text>
</comment>
<comment type="miscellaneous">
    <text>Its ability to confer resistance to dietary obesity suggests that it may serve as a possible therapeutic target in cases of type 2 diabetes and obesity.</text>
</comment>
<comment type="similarity">
    <text evidence="40">Belongs to the inositol 1,4,5-trisphosphate 5-phosphatase family.</text>
</comment>
<comment type="sequence caution" evidence="40">
    <conflict type="frameshift">
        <sequence resource="EMBL-CDS" id="AAA50503"/>
    </conflict>
</comment>
<comment type="sequence caution" evidence="40">
    <conflict type="frameshift">
        <sequence resource="EMBL-CDS" id="AAA96658"/>
    </conflict>
</comment>
<comment type="online information" name="Atlas of Genetics and Cytogenetics in Oncology and Haematology">
    <link uri="https://atlasgeneticsoncology.org/gene/40984/INPPL1"/>
</comment>
<keyword id="KW-0002">3D-structure</keyword>
<keyword id="KW-0009">Actin-binding</keyword>
<keyword id="KW-0025">Alternative splicing</keyword>
<keyword id="KW-0130">Cell adhesion</keyword>
<keyword id="KW-1003">Cell membrane</keyword>
<keyword id="KW-0966">Cell projection</keyword>
<keyword id="KW-0963">Cytoplasm</keyword>
<keyword id="KW-0206">Cytoskeleton</keyword>
<keyword id="KW-0219">Diabetes mellitus</keyword>
<keyword id="KW-0225">Disease variant</keyword>
<keyword id="KW-0378">Hydrolase</keyword>
<keyword id="KW-0391">Immunity</keyword>
<keyword id="KW-0443">Lipid metabolism</keyword>
<keyword id="KW-0472">Membrane</keyword>
<keyword id="KW-0539">Nucleus</keyword>
<keyword id="KW-0597">Phosphoprotein</keyword>
<keyword id="KW-1267">Proteomics identification</keyword>
<keyword id="KW-1185">Reference proteome</keyword>
<keyword id="KW-0727">SH2 domain</keyword>
<keyword id="KW-0729">SH3-binding</keyword>
<protein>
    <recommendedName>
        <fullName evidence="40">Phosphatidylinositol 3,4,5-trisphosphate 5-phosphatase 2</fullName>
        <ecNumber evidence="9 25 35">3.1.3.86</ecNumber>
    </recommendedName>
    <alternativeName>
        <fullName evidence="38">Inositol polyphosphate phosphatase-like protein 1</fullName>
        <shortName evidence="38">INPPL-1</shortName>
    </alternativeName>
    <alternativeName>
        <fullName evidence="39">Protein 51C</fullName>
    </alternativeName>
    <alternativeName>
        <fullName evidence="43">SH2 domain-containing inositol 5'-phosphatase 2</fullName>
        <shortName evidence="37">SH2 domain-containing inositol phosphatase 2</shortName>
        <shortName evidence="37">SHIP-2</shortName>
    </alternativeName>
</protein>
<accession>O15357</accession>
<accession>B2RTX5</accession>
<accession>Q13577</accession>
<accession>Q13578</accession>
<gene>
    <name evidence="43" type="primary">INPPL1</name>
    <name evidence="39" type="synonym">SHIP2</name>
</gene>
<organism>
    <name type="scientific">Homo sapiens</name>
    <name type="common">Human</name>
    <dbReference type="NCBI Taxonomy" id="9606"/>
    <lineage>
        <taxon>Eukaryota</taxon>
        <taxon>Metazoa</taxon>
        <taxon>Chordata</taxon>
        <taxon>Craniata</taxon>
        <taxon>Vertebrata</taxon>
        <taxon>Euteleostomi</taxon>
        <taxon>Mammalia</taxon>
        <taxon>Eutheria</taxon>
        <taxon>Euarchontoglires</taxon>
        <taxon>Primates</taxon>
        <taxon>Haplorrhini</taxon>
        <taxon>Catarrhini</taxon>
        <taxon>Hominidae</taxon>
        <taxon>Homo</taxon>
    </lineage>
</organism>
<dbReference type="EC" id="3.1.3.86" evidence="9 25 35"/>
<dbReference type="EMBL" id="L24444">
    <property type="protein sequence ID" value="AAA50503.1"/>
    <property type="status" value="ALT_FRAME"/>
    <property type="molecule type" value="mRNA"/>
</dbReference>
<dbReference type="EMBL" id="L36818">
    <property type="protein sequence ID" value="AAA96658.1"/>
    <property type="status" value="ALT_FRAME"/>
    <property type="molecule type" value="mRNA"/>
</dbReference>
<dbReference type="EMBL" id="Y14385">
    <property type="protein sequence ID" value="CAA74743.1"/>
    <property type="molecule type" value="mRNA"/>
</dbReference>
<dbReference type="EMBL" id="AP000593">
    <property type="status" value="NOT_ANNOTATED_CDS"/>
    <property type="molecule type" value="Genomic_DNA"/>
</dbReference>
<dbReference type="EMBL" id="CH471076">
    <property type="protein sequence ID" value="EAW74855.1"/>
    <property type="molecule type" value="Genomic_DNA"/>
</dbReference>
<dbReference type="EMBL" id="BC140853">
    <property type="protein sequence ID" value="AAI40854.1"/>
    <property type="molecule type" value="mRNA"/>
</dbReference>
<dbReference type="CCDS" id="CCDS8213.1">
    <molecule id="O15357-1"/>
</dbReference>
<dbReference type="PIR" id="JC5765">
    <property type="entry name" value="JC5765"/>
</dbReference>
<dbReference type="RefSeq" id="NP_001558.3">
    <molecule id="O15357-1"/>
    <property type="nucleotide sequence ID" value="NM_001567.3"/>
</dbReference>
<dbReference type="RefSeq" id="XP_011543301.1">
    <molecule id="O15357-1"/>
    <property type="nucleotide sequence ID" value="XM_011544999.3"/>
</dbReference>
<dbReference type="RefSeq" id="XP_047282846.1">
    <molecule id="O15357-1"/>
    <property type="nucleotide sequence ID" value="XM_047426890.1"/>
</dbReference>
<dbReference type="PDB" id="2K4P">
    <property type="method" value="NMR"/>
    <property type="chains" value="A=1194-1258"/>
</dbReference>
<dbReference type="PDB" id="2KSO">
    <property type="method" value="NMR"/>
    <property type="chains" value="B=1200-1258"/>
</dbReference>
<dbReference type="PDB" id="2MK2">
    <property type="method" value="NMR"/>
    <property type="chains" value="A=20-117"/>
</dbReference>
<dbReference type="PDB" id="3NR8">
    <property type="method" value="X-ray"/>
    <property type="resolution" value="2.80 A"/>
    <property type="chains" value="A/B=419-732"/>
</dbReference>
<dbReference type="PDB" id="4A9C">
    <property type="method" value="X-ray"/>
    <property type="resolution" value="2.10 A"/>
    <property type="chains" value="A/B=419-732"/>
</dbReference>
<dbReference type="PDB" id="5OKM">
    <property type="method" value="X-ray"/>
    <property type="resolution" value="1.96 A"/>
    <property type="chains" value="A/B/C/D/E/F/G/H=420-878"/>
</dbReference>
<dbReference type="PDB" id="5OKN">
    <property type="method" value="X-ray"/>
    <property type="resolution" value="2.65 A"/>
    <property type="chains" value="A/B/C/D/E/F/G/H=420-878"/>
</dbReference>
<dbReference type="PDB" id="5OKO">
    <property type="method" value="X-ray"/>
    <property type="resolution" value="1.94 A"/>
    <property type="chains" value="A/B=420-878"/>
</dbReference>
<dbReference type="PDB" id="5OKP">
    <property type="method" value="X-ray"/>
    <property type="resolution" value="1.85 A"/>
    <property type="chains" value="A=420-878"/>
</dbReference>
<dbReference type="PDB" id="6SQU">
    <property type="method" value="X-ray"/>
    <property type="resolution" value="2.27 A"/>
    <property type="chains" value="A/B=419-732"/>
</dbReference>
<dbReference type="PDB" id="6SRR">
    <property type="method" value="X-ray"/>
    <property type="resolution" value="2.45 A"/>
    <property type="chains" value="A/B=419-732"/>
</dbReference>
<dbReference type="PDBsum" id="2K4P"/>
<dbReference type="PDBsum" id="2KSO"/>
<dbReference type="PDBsum" id="2MK2"/>
<dbReference type="PDBsum" id="3NR8"/>
<dbReference type="PDBsum" id="4A9C"/>
<dbReference type="PDBsum" id="5OKM"/>
<dbReference type="PDBsum" id="5OKN"/>
<dbReference type="PDBsum" id="5OKO"/>
<dbReference type="PDBsum" id="5OKP"/>
<dbReference type="PDBsum" id="6SQU"/>
<dbReference type="PDBsum" id="6SRR"/>
<dbReference type="BMRB" id="O15357"/>
<dbReference type="SMR" id="O15357"/>
<dbReference type="BioGRID" id="109848">
    <property type="interactions" value="213"/>
</dbReference>
<dbReference type="CORUM" id="O15357"/>
<dbReference type="DIP" id="DIP-39733N"/>
<dbReference type="FunCoup" id="O15357">
    <property type="interactions" value="2557"/>
</dbReference>
<dbReference type="IntAct" id="O15357">
    <property type="interactions" value="187"/>
</dbReference>
<dbReference type="MINT" id="O15357"/>
<dbReference type="STRING" id="9606.ENSP00000298229"/>
<dbReference type="BindingDB" id="O15357"/>
<dbReference type="ChEMBL" id="CHEMBL2331064"/>
<dbReference type="DrugCentral" id="O15357"/>
<dbReference type="GuidetoPHARMACOLOGY" id="1459"/>
<dbReference type="SwissLipids" id="SLP:000000953"/>
<dbReference type="DEPOD" id="INPPL1"/>
<dbReference type="GlyCosmos" id="O15357">
    <property type="glycosylation" value="1 site, 2 glycans"/>
</dbReference>
<dbReference type="GlyGen" id="O15357">
    <property type="glycosylation" value="2 sites, 2 O-linked glycans (1 site)"/>
</dbReference>
<dbReference type="iPTMnet" id="O15357"/>
<dbReference type="MetOSite" id="O15357"/>
<dbReference type="PhosphoSitePlus" id="O15357"/>
<dbReference type="BioMuta" id="INPPL1"/>
<dbReference type="jPOST" id="O15357"/>
<dbReference type="MassIVE" id="O15357"/>
<dbReference type="PaxDb" id="9606-ENSP00000298229"/>
<dbReference type="PeptideAtlas" id="O15357"/>
<dbReference type="ProteomicsDB" id="48609">
    <molecule id="O15357-1"/>
</dbReference>
<dbReference type="ProteomicsDB" id="48610">
    <molecule id="O15357-2"/>
</dbReference>
<dbReference type="Pumba" id="O15357"/>
<dbReference type="Antibodypedia" id="30825">
    <property type="antibodies" value="341 antibodies from 33 providers"/>
</dbReference>
<dbReference type="DNASU" id="3636"/>
<dbReference type="Ensembl" id="ENST00000298229.7">
    <molecule id="O15357-1"/>
    <property type="protein sequence ID" value="ENSP00000298229.2"/>
    <property type="gene ID" value="ENSG00000165458.15"/>
</dbReference>
<dbReference type="Ensembl" id="ENST00000538751.5">
    <molecule id="O15357-2"/>
    <property type="protein sequence ID" value="ENSP00000444619.1"/>
    <property type="gene ID" value="ENSG00000165458.15"/>
</dbReference>
<dbReference type="GeneID" id="3636"/>
<dbReference type="KEGG" id="hsa:3636"/>
<dbReference type="MANE-Select" id="ENST00000298229.7">
    <property type="protein sequence ID" value="ENSP00000298229.2"/>
    <property type="RefSeq nucleotide sequence ID" value="NM_001567.4"/>
    <property type="RefSeq protein sequence ID" value="NP_001558.3"/>
</dbReference>
<dbReference type="UCSC" id="uc001osf.4">
    <molecule id="O15357-1"/>
    <property type="organism name" value="human"/>
</dbReference>
<dbReference type="AGR" id="HGNC:6080"/>
<dbReference type="CTD" id="3636"/>
<dbReference type="DisGeNET" id="3636"/>
<dbReference type="GeneCards" id="INPPL1"/>
<dbReference type="HGNC" id="HGNC:6080">
    <property type="gene designation" value="INPPL1"/>
</dbReference>
<dbReference type="HPA" id="ENSG00000165458">
    <property type="expression patterns" value="Low tissue specificity"/>
</dbReference>
<dbReference type="MalaCards" id="INPPL1"/>
<dbReference type="MIM" id="258480">
    <property type="type" value="phenotype"/>
</dbReference>
<dbReference type="MIM" id="600829">
    <property type="type" value="gene"/>
</dbReference>
<dbReference type="neXtProt" id="NX_O15357"/>
<dbReference type="OpenTargets" id="ENSG00000165458"/>
<dbReference type="Orphanet" id="2746">
    <property type="disease" value="Opsismodysplasia"/>
</dbReference>
<dbReference type="Orphanet" id="3144">
    <property type="disease" value="Schneckenbecken dysplasia"/>
</dbReference>
<dbReference type="PharmGKB" id="PA29888"/>
<dbReference type="VEuPathDB" id="HostDB:ENSG00000165458"/>
<dbReference type="eggNOG" id="KOG0565">
    <property type="taxonomic scope" value="Eukaryota"/>
</dbReference>
<dbReference type="eggNOG" id="KOG4384">
    <property type="taxonomic scope" value="Eukaryota"/>
</dbReference>
<dbReference type="GeneTree" id="ENSGT00940000156576"/>
<dbReference type="HOGENOM" id="CLU_007493_1_1_1"/>
<dbReference type="InParanoid" id="O15357"/>
<dbReference type="OMA" id="TERMGTR"/>
<dbReference type="OrthoDB" id="7862313at2759"/>
<dbReference type="PAN-GO" id="O15357">
    <property type="GO annotations" value="4 GO annotations based on evolutionary models"/>
</dbReference>
<dbReference type="PhylomeDB" id="O15357"/>
<dbReference type="TreeFam" id="TF323475"/>
<dbReference type="BioCyc" id="MetaCyc:HS09233-MONOMER"/>
<dbReference type="BRENDA" id="3.1.3.56">
    <property type="organism ID" value="2681"/>
</dbReference>
<dbReference type="BRENDA" id="3.1.3.86">
    <property type="organism ID" value="2681"/>
</dbReference>
<dbReference type="PathwayCommons" id="O15357"/>
<dbReference type="Reactome" id="R-HSA-1660499">
    <property type="pathway name" value="Synthesis of PIPs at the plasma membrane"/>
</dbReference>
<dbReference type="Reactome" id="R-HSA-1855204">
    <property type="pathway name" value="Synthesis of IP3 and IP4 in the cytosol"/>
</dbReference>
<dbReference type="Reactome" id="R-HSA-912526">
    <property type="pathway name" value="Interleukin receptor SHC signaling"/>
</dbReference>
<dbReference type="Reactome" id="R-HSA-9680350">
    <property type="pathway name" value="Signaling by CSF1 (M-CSF) in myeloid cells"/>
</dbReference>
<dbReference type="SABIO-RK" id="O15357"/>
<dbReference type="SignaLink" id="O15357"/>
<dbReference type="SIGNOR" id="O15357"/>
<dbReference type="BioGRID-ORCS" id="3636">
    <property type="hits" value="44 hits in 1200 CRISPR screens"/>
</dbReference>
<dbReference type="ChiTaRS" id="INPPL1">
    <property type="organism name" value="human"/>
</dbReference>
<dbReference type="EvolutionaryTrace" id="O15357"/>
<dbReference type="GeneWiki" id="INPPL1"/>
<dbReference type="GenomeRNAi" id="3636"/>
<dbReference type="Pharos" id="O15357">
    <property type="development level" value="Tchem"/>
</dbReference>
<dbReference type="PRO" id="PR:O15357"/>
<dbReference type="Proteomes" id="UP000005640">
    <property type="component" value="Chromosome 11"/>
</dbReference>
<dbReference type="RNAct" id="O15357">
    <property type="molecule type" value="protein"/>
</dbReference>
<dbReference type="Bgee" id="ENSG00000165458">
    <property type="expression patterns" value="Expressed in mucosa of stomach and 147 other cell types or tissues"/>
</dbReference>
<dbReference type="ExpressionAtlas" id="O15357">
    <property type="expression patterns" value="baseline and differential"/>
</dbReference>
<dbReference type="GO" id="GO:0009925">
    <property type="term" value="C:basal plasma membrane"/>
    <property type="evidence" value="ECO:0000250"/>
    <property type="project" value="UniProtKB"/>
</dbReference>
<dbReference type="GO" id="GO:0005829">
    <property type="term" value="C:cytosol"/>
    <property type="evidence" value="ECO:0000314"/>
    <property type="project" value="HPA"/>
</dbReference>
<dbReference type="GO" id="GO:0030175">
    <property type="term" value="C:filopodium"/>
    <property type="evidence" value="ECO:0007669"/>
    <property type="project" value="UniProtKB-SubCell"/>
</dbReference>
<dbReference type="GO" id="GO:0005794">
    <property type="term" value="C:Golgi apparatus"/>
    <property type="evidence" value="ECO:0000314"/>
    <property type="project" value="HPA"/>
</dbReference>
<dbReference type="GO" id="GO:0030027">
    <property type="term" value="C:lamellipodium"/>
    <property type="evidence" value="ECO:0007669"/>
    <property type="project" value="UniProtKB-SubCell"/>
</dbReference>
<dbReference type="GO" id="GO:0016607">
    <property type="term" value="C:nuclear speck"/>
    <property type="evidence" value="ECO:0000250"/>
    <property type="project" value="UniProtKB"/>
</dbReference>
<dbReference type="GO" id="GO:0005634">
    <property type="term" value="C:nucleus"/>
    <property type="evidence" value="ECO:0000250"/>
    <property type="project" value="UniProtKB"/>
</dbReference>
<dbReference type="GO" id="GO:0000922">
    <property type="term" value="C:spindle pole"/>
    <property type="evidence" value="ECO:0000250"/>
    <property type="project" value="UniProtKB"/>
</dbReference>
<dbReference type="GO" id="GO:0003779">
    <property type="term" value="F:actin binding"/>
    <property type="evidence" value="ECO:0007669"/>
    <property type="project" value="UniProtKB-KW"/>
</dbReference>
<dbReference type="GO" id="GO:0004445">
    <property type="term" value="F:inositol-polyphosphate 5-phosphatase activity"/>
    <property type="evidence" value="ECO:0000318"/>
    <property type="project" value="GO_Central"/>
</dbReference>
<dbReference type="GO" id="GO:0034485">
    <property type="term" value="F:phosphatidylinositol-3,4,5-trisphosphate 5-phosphatase activity"/>
    <property type="evidence" value="ECO:0000304"/>
    <property type="project" value="Reactome"/>
</dbReference>
<dbReference type="GO" id="GO:0042169">
    <property type="term" value="F:SH2 domain binding"/>
    <property type="evidence" value="ECO:0000353"/>
    <property type="project" value="UniProtKB"/>
</dbReference>
<dbReference type="GO" id="GO:0017124">
    <property type="term" value="F:SH3 domain binding"/>
    <property type="evidence" value="ECO:0007669"/>
    <property type="project" value="UniProtKB-KW"/>
</dbReference>
<dbReference type="GO" id="GO:0007015">
    <property type="term" value="P:actin filament organization"/>
    <property type="evidence" value="ECO:0000315"/>
    <property type="project" value="UniProtKB"/>
</dbReference>
<dbReference type="GO" id="GO:0006915">
    <property type="term" value="P:apoptotic process"/>
    <property type="evidence" value="ECO:0007669"/>
    <property type="project" value="Ensembl"/>
</dbReference>
<dbReference type="GO" id="GO:0007155">
    <property type="term" value="P:cell adhesion"/>
    <property type="evidence" value="ECO:0000304"/>
    <property type="project" value="UniProtKB"/>
</dbReference>
<dbReference type="GO" id="GO:0001958">
    <property type="term" value="P:endochondral ossification"/>
    <property type="evidence" value="ECO:0000315"/>
    <property type="project" value="UniProtKB"/>
</dbReference>
<dbReference type="GO" id="GO:0006897">
    <property type="term" value="P:endocytosis"/>
    <property type="evidence" value="ECO:0000315"/>
    <property type="project" value="UniProtKB"/>
</dbReference>
<dbReference type="GO" id="GO:0070371">
    <property type="term" value="P:ERK1 and ERK2 cascade"/>
    <property type="evidence" value="ECO:0007669"/>
    <property type="project" value="Ensembl"/>
</dbReference>
<dbReference type="GO" id="GO:0000132">
    <property type="term" value="P:establishment of mitotic spindle orientation"/>
    <property type="evidence" value="ECO:0000250"/>
    <property type="project" value="UniProtKB"/>
</dbReference>
<dbReference type="GO" id="GO:0010467">
    <property type="term" value="P:gene expression"/>
    <property type="evidence" value="ECO:0007669"/>
    <property type="project" value="Ensembl"/>
</dbReference>
<dbReference type="GO" id="GO:0006006">
    <property type="term" value="P:glucose metabolic process"/>
    <property type="evidence" value="ECO:0007669"/>
    <property type="project" value="Ensembl"/>
</dbReference>
<dbReference type="GO" id="GO:0002376">
    <property type="term" value="P:immune system process"/>
    <property type="evidence" value="ECO:0007669"/>
    <property type="project" value="UniProtKB-KW"/>
</dbReference>
<dbReference type="GO" id="GO:0008285">
    <property type="term" value="P:negative regulation of cell population proliferation"/>
    <property type="evidence" value="ECO:0007669"/>
    <property type="project" value="Ensembl"/>
</dbReference>
<dbReference type="GO" id="GO:0010629">
    <property type="term" value="P:negative regulation of gene expression"/>
    <property type="evidence" value="ECO:0007669"/>
    <property type="project" value="Ensembl"/>
</dbReference>
<dbReference type="GO" id="GO:0043569">
    <property type="term" value="P:negative regulation of insulin-like growth factor receptor signaling pathway"/>
    <property type="evidence" value="ECO:0000318"/>
    <property type="project" value="GO_Central"/>
</dbReference>
<dbReference type="GO" id="GO:0043491">
    <property type="term" value="P:phosphatidylinositol 3-kinase/protein kinase B signal transduction"/>
    <property type="evidence" value="ECO:0007669"/>
    <property type="project" value="Ensembl"/>
</dbReference>
<dbReference type="GO" id="GO:0006661">
    <property type="term" value="P:phosphatidylinositol biosynthetic process"/>
    <property type="evidence" value="ECO:0000304"/>
    <property type="project" value="Reactome"/>
</dbReference>
<dbReference type="GO" id="GO:0046856">
    <property type="term" value="P:phosphatidylinositol dephosphorylation"/>
    <property type="evidence" value="ECO:0007669"/>
    <property type="project" value="InterPro"/>
</dbReference>
<dbReference type="GO" id="GO:0009791">
    <property type="term" value="P:post-embryonic development"/>
    <property type="evidence" value="ECO:0007669"/>
    <property type="project" value="Ensembl"/>
</dbReference>
<dbReference type="GO" id="GO:0110053">
    <property type="term" value="P:regulation of actin filament organization"/>
    <property type="evidence" value="ECO:0000250"/>
    <property type="project" value="UniProtKB"/>
</dbReference>
<dbReference type="GO" id="GO:0050776">
    <property type="term" value="P:regulation of immune response"/>
    <property type="evidence" value="ECO:0000318"/>
    <property type="project" value="GO_Central"/>
</dbReference>
<dbReference type="GO" id="GO:0032880">
    <property type="term" value="P:regulation of protein localization"/>
    <property type="evidence" value="ECO:0000250"/>
    <property type="project" value="UniProtKB"/>
</dbReference>
<dbReference type="GO" id="GO:0032868">
    <property type="term" value="P:response to insulin"/>
    <property type="evidence" value="ECO:0007669"/>
    <property type="project" value="Ensembl"/>
</dbReference>
<dbReference type="GO" id="GO:0097178">
    <property type="term" value="P:ruffle assembly"/>
    <property type="evidence" value="ECO:0007669"/>
    <property type="project" value="Ensembl"/>
</dbReference>
<dbReference type="CDD" id="cd09101">
    <property type="entry name" value="INPP5c_SHIP2-INPPL1"/>
    <property type="match status" value="1"/>
</dbReference>
<dbReference type="CDD" id="cd09491">
    <property type="entry name" value="SAM_Ship2"/>
    <property type="match status" value="1"/>
</dbReference>
<dbReference type="CDD" id="cd10343">
    <property type="entry name" value="SH2_SHIP"/>
    <property type="match status" value="1"/>
</dbReference>
<dbReference type="FunFam" id="3.30.505.10:FF:000035">
    <property type="entry name" value="phosphatidylinositol 3,4,5-trisphosphate 5-phosphatase 1"/>
    <property type="match status" value="1"/>
</dbReference>
<dbReference type="FunFam" id="3.60.10.10:FF:000005">
    <property type="entry name" value="phosphatidylinositol 3,4,5-trisphosphate 5-phosphatase 1"/>
    <property type="match status" value="1"/>
</dbReference>
<dbReference type="FunFam" id="1.10.150.50:FF:000049">
    <property type="entry name" value="phosphatidylinositol 3,4,5-trisphosphate 5-phosphatase 2"/>
    <property type="match status" value="1"/>
</dbReference>
<dbReference type="Gene3D" id="3.60.10.10">
    <property type="entry name" value="Endonuclease/exonuclease/phosphatase"/>
    <property type="match status" value="1"/>
</dbReference>
<dbReference type="Gene3D" id="3.30.505.10">
    <property type="entry name" value="SH2 domain"/>
    <property type="match status" value="1"/>
</dbReference>
<dbReference type="Gene3D" id="1.10.150.50">
    <property type="entry name" value="Transcription Factor, Ets-1"/>
    <property type="match status" value="1"/>
</dbReference>
<dbReference type="InterPro" id="IPR036691">
    <property type="entry name" value="Endo/exonu/phosph_ase_sf"/>
</dbReference>
<dbReference type="InterPro" id="IPR000300">
    <property type="entry name" value="IPPc"/>
</dbReference>
<dbReference type="InterPro" id="IPR001660">
    <property type="entry name" value="SAM"/>
</dbReference>
<dbReference type="InterPro" id="IPR013761">
    <property type="entry name" value="SAM/pointed_sf"/>
</dbReference>
<dbReference type="InterPro" id="IPR000980">
    <property type="entry name" value="SH2"/>
</dbReference>
<dbReference type="InterPro" id="IPR036860">
    <property type="entry name" value="SH2_dom_sf"/>
</dbReference>
<dbReference type="PANTHER" id="PTHR46051:SF2">
    <property type="entry name" value="PHOSPHATIDYLINOSITOL 3,4,5-TRISPHOSPHATE 5-PHOSPHATASE 2"/>
    <property type="match status" value="1"/>
</dbReference>
<dbReference type="PANTHER" id="PTHR46051">
    <property type="entry name" value="SH2 DOMAIN-CONTAINING PROTEIN"/>
    <property type="match status" value="1"/>
</dbReference>
<dbReference type="Pfam" id="PF24147">
    <property type="entry name" value="C2_SHIP1-2_2nd"/>
    <property type="match status" value="1"/>
</dbReference>
<dbReference type="Pfam" id="PF24150">
    <property type="entry name" value="C2_SHIP1-2_first"/>
    <property type="match status" value="1"/>
</dbReference>
<dbReference type="Pfam" id="PF22669">
    <property type="entry name" value="Exo_endo_phos2"/>
    <property type="match status" value="1"/>
</dbReference>
<dbReference type="Pfam" id="PF00536">
    <property type="entry name" value="SAM_1"/>
    <property type="match status" value="1"/>
</dbReference>
<dbReference type="Pfam" id="PF00017">
    <property type="entry name" value="SH2"/>
    <property type="match status" value="1"/>
</dbReference>
<dbReference type="PRINTS" id="PR00401">
    <property type="entry name" value="SH2DOMAIN"/>
</dbReference>
<dbReference type="SMART" id="SM00128">
    <property type="entry name" value="IPPc"/>
    <property type="match status" value="1"/>
</dbReference>
<dbReference type="SMART" id="SM00454">
    <property type="entry name" value="SAM"/>
    <property type="match status" value="1"/>
</dbReference>
<dbReference type="SMART" id="SM00252">
    <property type="entry name" value="SH2"/>
    <property type="match status" value="1"/>
</dbReference>
<dbReference type="SUPFAM" id="SSF56219">
    <property type="entry name" value="DNase I-like"/>
    <property type="match status" value="1"/>
</dbReference>
<dbReference type="SUPFAM" id="SSF47769">
    <property type="entry name" value="SAM/Pointed domain"/>
    <property type="match status" value="1"/>
</dbReference>
<dbReference type="SUPFAM" id="SSF55550">
    <property type="entry name" value="SH2 domain"/>
    <property type="match status" value="1"/>
</dbReference>
<dbReference type="PROSITE" id="PS50105">
    <property type="entry name" value="SAM_DOMAIN"/>
    <property type="match status" value="1"/>
</dbReference>
<dbReference type="PROSITE" id="PS50001">
    <property type="entry name" value="SH2"/>
    <property type="match status" value="1"/>
</dbReference>
<reference key="1">
    <citation type="journal article" date="1995" name="Genomics">
        <title>Cloning and characterization of a human cDNA (INPPL1) sharing homology with inositol polyphosphate phosphatases.</title>
        <authorList>
            <person name="Hejna J.A."/>
            <person name="Saito H."/>
            <person name="Merkens L.S."/>
            <person name="Tittle T.V."/>
            <person name="Jakobs P.M."/>
            <person name="Whitney M.A."/>
            <person name="Grompe M."/>
            <person name="Friedberg A.S."/>
            <person name="Moses R.E."/>
        </authorList>
    </citation>
    <scope>NUCLEOTIDE SEQUENCE [MRNA] (ISOFORM 2)</scope>
    <scope>TISSUE SPECIFICITY</scope>
</reference>
<reference key="2">
    <citation type="journal article" date="1997" name="Biochem. Biophys. Res. Commun.">
        <title>Identification of a second SH2-domain-containing protein closely related to the phosphatidylinositol polyphosphate 5-phosphatase SHIP.</title>
        <authorList>
            <person name="Pesesse X."/>
            <person name="Deleu S."/>
            <person name="De Smedt F."/>
            <person name="Drayer L."/>
            <person name="Erneux C."/>
        </authorList>
    </citation>
    <scope>NUCLEOTIDE SEQUENCE [MRNA] (ISOFORM 1)</scope>
    <scope>TISSUE SPECIFICITY</scope>
    <scope>VARIANT GLY-1114</scope>
    <source>
        <tissue>Hippocampus</tissue>
    </source>
</reference>
<reference key="3">
    <citation type="journal article" date="2006" name="Nature">
        <title>Human chromosome 11 DNA sequence and analysis including novel gene identification.</title>
        <authorList>
            <person name="Taylor T.D."/>
            <person name="Noguchi H."/>
            <person name="Totoki Y."/>
            <person name="Toyoda A."/>
            <person name="Kuroki Y."/>
            <person name="Dewar K."/>
            <person name="Lloyd C."/>
            <person name="Itoh T."/>
            <person name="Takeda T."/>
            <person name="Kim D.-W."/>
            <person name="She X."/>
            <person name="Barlow K.F."/>
            <person name="Bloom T."/>
            <person name="Bruford E."/>
            <person name="Chang J.L."/>
            <person name="Cuomo C.A."/>
            <person name="Eichler E."/>
            <person name="FitzGerald M.G."/>
            <person name="Jaffe D.B."/>
            <person name="LaButti K."/>
            <person name="Nicol R."/>
            <person name="Park H.-S."/>
            <person name="Seaman C."/>
            <person name="Sougnez C."/>
            <person name="Yang X."/>
            <person name="Zimmer A.R."/>
            <person name="Zody M.C."/>
            <person name="Birren B.W."/>
            <person name="Nusbaum C."/>
            <person name="Fujiyama A."/>
            <person name="Hattori M."/>
            <person name="Rogers J."/>
            <person name="Lander E.S."/>
            <person name="Sakaki Y."/>
        </authorList>
    </citation>
    <scope>NUCLEOTIDE SEQUENCE [LARGE SCALE GENOMIC DNA]</scope>
</reference>
<reference key="4">
    <citation type="submission" date="2005-07" db="EMBL/GenBank/DDBJ databases">
        <authorList>
            <person name="Mural R.J."/>
            <person name="Istrail S."/>
            <person name="Sutton G.G."/>
            <person name="Florea L."/>
            <person name="Halpern A.L."/>
            <person name="Mobarry C.M."/>
            <person name="Lippert R."/>
            <person name="Walenz B."/>
            <person name="Shatkay H."/>
            <person name="Dew I."/>
            <person name="Miller J.R."/>
            <person name="Flanigan M.J."/>
            <person name="Edwards N.J."/>
            <person name="Bolanos R."/>
            <person name="Fasulo D."/>
            <person name="Halldorsson B.V."/>
            <person name="Hannenhalli S."/>
            <person name="Turner R."/>
            <person name="Yooseph S."/>
            <person name="Lu F."/>
            <person name="Nusskern D.R."/>
            <person name="Shue B.C."/>
            <person name="Zheng X.H."/>
            <person name="Zhong F."/>
            <person name="Delcher A.L."/>
            <person name="Huson D.H."/>
            <person name="Kravitz S.A."/>
            <person name="Mouchard L."/>
            <person name="Reinert K."/>
            <person name="Remington K.A."/>
            <person name="Clark A.G."/>
            <person name="Waterman M.S."/>
            <person name="Eichler E.E."/>
            <person name="Adams M.D."/>
            <person name="Hunkapiller M.W."/>
            <person name="Myers E.W."/>
            <person name="Venter J.C."/>
        </authorList>
    </citation>
    <scope>NUCLEOTIDE SEQUENCE [LARGE SCALE GENOMIC DNA]</scope>
    <scope>VARIANT GLY-1114</scope>
</reference>
<reference key="5">
    <citation type="journal article" date="2004" name="Genome Res.">
        <title>The status, quality, and expansion of the NIH full-length cDNA project: the Mammalian Gene Collection (MGC).</title>
        <authorList>
            <consortium name="The MGC Project Team"/>
        </authorList>
    </citation>
    <scope>NUCLEOTIDE SEQUENCE [LARGE SCALE MRNA] (ISOFORM 1)</scope>
    <scope>VARIANT GLY-1114</scope>
</reference>
<reference key="6">
    <citation type="journal article" date="1998" name="J. Biol. Chem.">
        <title>Growth factors and insulin stimulate tyrosine phosphorylation of the 51C/SHIP2 protein.</title>
        <authorList>
            <person name="Habib T."/>
            <person name="Hejna J.A."/>
            <person name="Moses R.E."/>
            <person name="Decker S.J."/>
        </authorList>
    </citation>
    <scope>FUNCTION</scope>
    <scope>CATALYTIC ACTIVITY</scope>
    <scope>TISSUE SPECIFICITY</scope>
    <scope>PHOSPHORYLATION</scope>
    <scope>INTERACTION WITH SHC1</scope>
</reference>
<reference key="7">
    <citation type="journal article" date="1999" name="Blood">
        <title>A novel SH2-containing phosphatidylinositol 3,4,5-trisphosphate 5-phosphatase (SHIP2) is constitutively tyrosine phosphorylated and associated with src homologous and collagen gene (SHC) in chronic myelogenous leukemia progenitor cells.</title>
        <authorList>
            <person name="Wisniewski D."/>
            <person name="Strife A."/>
            <person name="Swendeman S."/>
            <person name="Erdjument-Bromage H."/>
            <person name="Geromanos S."/>
            <person name="Kavanaugh W.M."/>
            <person name="Tempst P."/>
            <person name="Clarkson B."/>
        </authorList>
    </citation>
    <scope>IDENTIFICATION BY MASS SPECTROMETRY</scope>
    <scope>CATALYTIC ACTIVITY</scope>
    <scope>PHOSPHORYLATION</scope>
    <scope>INTERACTION WITH SHC1 AND ABL1</scope>
</reference>
<reference key="8">
    <citation type="journal article" date="2000" name="J. Biol. Chem.">
        <title>Molecular basis of the recruitment of the SH2 domain-containing inositol 5-phosphatases SHIP1 and SHIP2 by fcgamma RIIB.</title>
        <authorList>
            <person name="Bruhns P."/>
            <person name="Vely F."/>
            <person name="Malbec O."/>
            <person name="Fridman W.H."/>
            <person name="Vivier E."/>
            <person name="Daeeron M."/>
        </authorList>
    </citation>
    <scope>FUNCTION</scope>
    <scope>INTERACTION WITH FCGR2B</scope>
</reference>
<reference key="9">
    <citation type="journal article" date="2001" name="J. Biol. Chem.">
        <title>The Src homology 2 domain containing inositol 5-phosphatase SHIP2 is recruited to the epidermal growth factor (EGF) receptor and dephosphorylates phosphatidylinositol 3,4,5-trisphosphate in EGF-stimulated COS-7 cells.</title>
        <authorList>
            <person name="Pesesse X."/>
            <person name="Dewaste V."/>
            <person name="De Smedt F."/>
            <person name="Laffargue M."/>
            <person name="Giuriato S."/>
            <person name="Moreau C."/>
            <person name="Payrastre B."/>
            <person name="Erneux C."/>
        </authorList>
    </citation>
    <scope>FUNCTION</scope>
    <scope>SUBCELLULAR LOCATION</scope>
    <scope>INTERACTION WITH EGFR AND SHC1</scope>
    <scope>PHOSPHORYLATION AT TYR-986</scope>
</reference>
<reference key="10">
    <citation type="journal article" date="2001" name="J. Cell Biol.">
        <title>The SH2-containing inositol polyphosphate 5-phosphatase, SHIP-2, binds filamin and regulates submembraneous actin.</title>
        <authorList>
            <person name="Dyson J.M."/>
            <person name="O'Malley C.J."/>
            <person name="Becanovic J."/>
            <person name="Munday A.D."/>
            <person name="Berndt M.C."/>
            <person name="Coghill I.D."/>
            <person name="Nandurkar H.H."/>
            <person name="Ooms L.M."/>
            <person name="Mitchell C.A."/>
        </authorList>
    </citation>
    <scope>FUNCTION</scope>
    <scope>SUBCELLULAR LOCATION</scope>
    <scope>INTERACTION WITH FLNA AND FLNB</scope>
</reference>
<reference key="11">
    <citation type="journal article" date="2001" name="Mol. Cell. Biol.">
        <title>SH2-containing inositol 5'-phosphatase SHIP2 associates with the p130(Cas) adapter protein and regulates cellular adhesion and spreading.</title>
        <authorList>
            <person name="Prasad N."/>
            <person name="Topping R.S."/>
            <person name="Decker S.J."/>
        </authorList>
    </citation>
    <scope>PHOSPHORYLATION</scope>
    <scope>INTERACTION WITH BCAR1</scope>
    <scope>MUTAGENESIS OF ARG-47</scope>
</reference>
<reference key="12">
    <citation type="journal article" date="2002" name="J. Biol. Chem.">
        <title>Tyrosine phosphorylation mapping of the epidermal growth factor receptor signaling pathway.</title>
        <authorList>
            <person name="Steen H."/>
            <person name="Kuster B."/>
            <person name="Fernandez M."/>
            <person name="Pandey A."/>
            <person name="Mann M."/>
        </authorList>
    </citation>
    <scope>PHOSPHORYLATION AT TYR-1162</scope>
</reference>
<reference key="13">
    <citation type="journal article" date="2002" name="J. Cell Sci.">
        <title>Src family tyrosine kinases regulate adhesion-dependent tyrosine phosphorylation of 5'-inositol phosphatase SHIP2 during cell attachment and spreading on collagen I.</title>
        <authorList>
            <person name="Prasad N."/>
            <person name="Topping R.S."/>
            <person name="Decker S.J."/>
        </authorList>
    </citation>
    <scope>FUNCTION</scope>
    <scope>PHOSPHORYLATION AT TYR-986</scope>
    <scope>MUTAGENESIS OF 986-TYR-TYR-987</scope>
</reference>
<reference key="14">
    <citation type="journal article" date="2003" name="Biochem. Biophys. Res. Commun.">
        <title>The c-Cbl-associated protein and c-Cbl are two new partners of the SH2-containing inositol polyphosphate 5-phosphatase SHIP2.</title>
        <authorList>
            <person name="Vandenbroere I."/>
            <person name="Paternotte N."/>
            <person name="Dumont J.E."/>
            <person name="Erneux C."/>
            <person name="Pirson I."/>
        </authorList>
    </citation>
    <scope>INTERACTION WITH CBL AND SORBS1</scope>
</reference>
<reference key="15">
    <citation type="journal article" date="2003" name="Blood">
        <title>SHIP-2 forms a tetrameric complex with filamin, actin, and GPIb-IX-V: localization of SHIP-2 to the activated platelet actin cytoskeleton.</title>
        <authorList>
            <person name="Dyson J.M."/>
            <person name="Munday A.D."/>
            <person name="Kong A.M."/>
            <person name="Huysmans R.D."/>
            <person name="Matzaris M."/>
            <person name="Layton M.J."/>
            <person name="Nandurkar H.H."/>
            <person name="Berndt M.C."/>
            <person name="Mitchell C.A."/>
        </authorList>
    </citation>
    <scope>FUNCTION</scope>
    <scope>SUBCELLULAR LOCATION</scope>
    <scope>TISSUE SPECIFICITY</scope>
    <scope>INTERACTION WITH ACTIN; FILAMIN AND GPIB</scope>
</reference>
<reference key="16">
    <citation type="journal article" date="2003" name="J. Biol. Chem.">
        <title>SHIP-2 inositol phosphatase is inducibly expressed in human monocytes and serves to regulate Fcgamma receptor-mediated signaling.</title>
        <authorList>
            <person name="Pengal R.A."/>
            <person name="Ganesan L.P."/>
            <person name="Fang H."/>
            <person name="Marsh C.B."/>
            <person name="Anderson C.L."/>
            <person name="Tridandapani S."/>
        </authorList>
    </citation>
    <scope>FUNCTION</scope>
    <scope>TISSUE SPECIFICITY</scope>
    <scope>INDUCTION</scope>
    <scope>PHOSPHORYLATION</scope>
    <scope>INTERACTION WITH FCGR2A</scope>
    <scope>MUTAGENESIS OF ARG-47 AND ASP-607</scope>
</reference>
<reference key="17">
    <citation type="journal article" date="2005" name="Nat. Biotechnol.">
        <title>Immunoaffinity profiling of tyrosine phosphorylation in cancer cells.</title>
        <authorList>
            <person name="Rush J."/>
            <person name="Moritz A."/>
            <person name="Lee K.A."/>
            <person name="Guo A."/>
            <person name="Goss V.L."/>
            <person name="Spek E.J."/>
            <person name="Zhang H."/>
            <person name="Zha X.-M."/>
            <person name="Polakiewicz R.D."/>
            <person name="Comb M.J."/>
        </authorList>
    </citation>
    <scope>IDENTIFICATION BY MASS SPECTROMETRY [LARGE SCALE ANALYSIS]</scope>
</reference>
<reference key="18">
    <citation type="journal article" date="2006" name="Cell">
        <title>Global, in vivo, and site-specific phosphorylation dynamics in signaling networks.</title>
        <authorList>
            <person name="Olsen J.V."/>
            <person name="Blagoev B."/>
            <person name="Gnad F."/>
            <person name="Macek B."/>
            <person name="Kumar C."/>
            <person name="Mortensen P."/>
            <person name="Mann M."/>
        </authorList>
    </citation>
    <scope>PHOSPHORYLATION [LARGE SCALE ANALYSIS] AT TYR-1135</scope>
    <scope>IDENTIFICATION BY MASS SPECTROMETRY [LARGE SCALE ANALYSIS]</scope>
    <source>
        <tissue>Cervix carcinoma</tissue>
    </source>
</reference>
<reference key="19">
    <citation type="journal article" date="2006" name="Cell. Signal.">
        <title>The influence of anionic lipids on SHIP2 phosphatidylinositol 3,4,5-trisphosphate 5-phosphatase activity.</title>
        <authorList>
            <person name="Vandeput F."/>
            <person name="Backers K."/>
            <person name="Villeret V."/>
            <person name="Pesesse X."/>
            <person name="Erneux C."/>
        </authorList>
    </citation>
    <scope>FUNCTION</scope>
    <scope>ACTIVITY REGULATION</scope>
    <scope>CATALYTIC ACTIVITY</scope>
</reference>
<reference key="20">
    <citation type="journal article" date="2005" name="FEBS J.">
        <title>SHIP2 interaction with the cytoskeletal protein Vinexin.</title>
        <authorList>
            <person name="Paternotte N."/>
            <person name="Zhang J."/>
            <person name="Vandenbroere I."/>
            <person name="Backers K."/>
            <person name="Blero D."/>
            <person name="Kioka N."/>
            <person name="Vanderwinden J.-M."/>
            <person name="Pirson I."/>
            <person name="Erneux C."/>
        </authorList>
    </citation>
    <scope>INTERACTION WITH SORBS3</scope>
</reference>
<reference key="21">
    <citation type="journal article" date="2005" name="J. Biol. Chem.">
        <title>SH2-containing 5'-inositol phosphatase, SHIP2, regulates cytoskeleton organization and ligand-dependent down-regulation of the epidermal growth factor receptor.</title>
        <authorList>
            <person name="Prasad N.K."/>
            <person name="Decker S.J."/>
        </authorList>
    </citation>
    <scope>FUNCTION</scope>
</reference>
<reference key="22">
    <citation type="journal article" date="2005" name="Oncogene">
        <title>The SH2-domain-containing inositol 5-phosphatase (SHIP)-2 binds to c-Met directly via tyrosine residue 1356 and involves hepatocyte growth factor (HGF)-induced lamellipodium formation, cell scattering and cell spreading.</title>
        <authorList>
            <person name="Koch A."/>
            <person name="Mancini A."/>
            <person name="El Bounkari O."/>
            <person name="Tamura T."/>
        </authorList>
    </citation>
    <scope>FUNCTION</scope>
    <scope>INTERACTION WITH MET</scope>
</reference>
<reference key="23">
    <citation type="journal article" date="2007" name="Cell. Signal.">
        <title>The PI3K effector Arap3 interacts with the PI(3,4,5)P3 phosphatase SHIP2 in a SAM domain-dependent manner.</title>
        <authorList>
            <person name="Raaijmakers J.H."/>
            <person name="Deneubourg L."/>
            <person name="Rehmann H."/>
            <person name="de Koning J."/>
            <person name="Zhang Z."/>
            <person name="Krugmann S."/>
            <person name="Erneux C."/>
            <person name="Bos J.L."/>
        </authorList>
    </citation>
    <scope>INTERACTION WITH CENTD3</scope>
</reference>
<reference key="24">
    <citation type="journal article" date="2007" name="J. Biol. Chem.">
        <title>Regulation of EphA2 receptor endocytosis by SHIP2 lipid phosphatase via phosphatidylinositol 3-Kinase-dependent Rac1 activation.</title>
        <authorList>
            <person name="Zhuang G."/>
            <person name="Hunter S."/>
            <person name="Hwang Y."/>
            <person name="Chen J."/>
        </authorList>
    </citation>
    <scope>FUNCTION</scope>
    <scope>INTERACTION WITH EPHA2</scope>
</reference>
<reference key="25">
    <citation type="journal article" date="2007" name="J. Cell. Physiol.">
        <title>Regulation of PDGF-stimulated SHIP2 tyrosine phosphorylation and association with Shc in 3T3-L1 preadipocytes.</title>
        <authorList>
            <person name="Artemenko Y."/>
            <person name="Gagnon A."/>
            <person name="Ibrahim S."/>
            <person name="Sorisky A."/>
        </authorList>
    </citation>
    <scope>PHOSPHORYLATION AT THR-958</scope>
    <scope>MUTAGENESIS OF THR-958</scope>
</reference>
<reference key="26">
    <citation type="journal article" date="2004" name="Diabetes">
        <title>Polymorphisms in type II SH2 domain-containing inositol 5-phosphatase (INPPL1, SHIP2) are associated with physiological abnormalities of the metabolic syndrome.</title>
        <authorList>
            <person name="Kaisaki P.J."/>
            <person name="Delepine M."/>
            <person name="Woon P.Y."/>
            <person name="Sebag-Montefiore L."/>
            <person name="Wilder S.P."/>
            <person name="Menzel S."/>
            <person name="Vionnet N."/>
            <person name="Marion E."/>
            <person name="Riveline J.-P."/>
            <person name="Charpentier G."/>
            <person name="Schurmans S."/>
            <person name="Levy J.C."/>
            <person name="Lathrop M."/>
            <person name="Farrall M."/>
            <person name="Gauguier D."/>
        </authorList>
    </citation>
    <scope>INVOLVEMENT IN METABOLIC SYNDROME</scope>
</reference>
<reference key="27">
    <citation type="journal article" date="2005" name="J. Clin. Endocrinol. Metab.">
        <title>Impact of SRC homology 2-containing inositol 5'-phosphatase 2 gene polymorphisms detected in a Japanese population on insulin signaling.</title>
        <authorList>
            <person name="Kagawa S."/>
            <person name="Sasaoka T."/>
            <person name="Yaguchi S."/>
            <person name="Ishihara H."/>
            <person name="Tsuneki H."/>
            <person name="Murakami S."/>
            <person name="Fukui K."/>
            <person name="Wada T."/>
            <person name="Kobayashi S."/>
            <person name="Kimura I."/>
            <person name="Kobayashi M."/>
        </authorList>
    </citation>
    <scope>VARIANTS ILE-632; MET-721; SER-982 AND GLY-1083</scope>
</reference>
<reference key="28">
    <citation type="journal article" date="2007" name="J. Med. Genet.">
        <title>Genetic association analysis of inositol polyphosphate phosphatase-like 1 (INPPL1, SHIP2) variants with essential hypertension.</title>
        <authorList>
            <person name="Braga Marcano A.C."/>
            <person name="Burke B."/>
            <person name="Gungadoo J."/>
            <person name="Wallace C."/>
            <person name="Kaisaki P.J."/>
            <person name="Woon P.Y."/>
            <person name="Farrall M."/>
            <person name="Clayton D."/>
            <person name="Brown M."/>
            <person name="Dominiczak A."/>
            <person name="Connell J.M."/>
            <person name="Webster J."/>
            <person name="Lathrop M."/>
            <person name="Caulfield M."/>
            <person name="Samani N."/>
            <person name="Gauguier D."/>
            <person name="Munroe P.B."/>
        </authorList>
    </citation>
    <scope>INVOLVEMENT IN METABOLIC SYNDROME</scope>
</reference>
<reference key="29">
    <citation type="journal article" date="2008" name="Mol. Cell">
        <title>Kinase-selective enrichment enables quantitative phosphoproteomics of the kinome across the cell cycle.</title>
        <authorList>
            <person name="Daub H."/>
            <person name="Olsen J.V."/>
            <person name="Bairlein M."/>
            <person name="Gnad F."/>
            <person name="Oppermann F.S."/>
            <person name="Korner R."/>
            <person name="Greff Z."/>
            <person name="Keri G."/>
            <person name="Stemmann O."/>
            <person name="Mann M."/>
        </authorList>
    </citation>
    <scope>IDENTIFICATION BY MASS SPECTROMETRY [LARGE SCALE ANALYSIS]</scope>
    <source>
        <tissue>Cervix carcinoma</tissue>
    </source>
</reference>
<reference key="30">
    <citation type="journal article" date="2008" name="Proc. Natl. Acad. Sci. U.S.A.">
        <title>A quantitative atlas of mitotic phosphorylation.</title>
        <authorList>
            <person name="Dephoure N."/>
            <person name="Zhou C."/>
            <person name="Villen J."/>
            <person name="Beausoleil S.A."/>
            <person name="Bakalarski C.E."/>
            <person name="Elledge S.J."/>
            <person name="Gygi S.P."/>
        </authorList>
    </citation>
    <scope>PHOSPHORYLATION [LARGE SCALE ANALYSIS] AT THR-165 AND SER-241</scope>
    <scope>IDENTIFICATION BY MASS SPECTROMETRY [LARGE SCALE ANALYSIS]</scope>
    <source>
        <tissue>Cervix carcinoma</tissue>
    </source>
</reference>
<reference key="31">
    <citation type="journal article" date="2010" name="Sci. Signal.">
        <title>Quantitative phosphoproteomics reveals widespread full phosphorylation site occupancy during mitosis.</title>
        <authorList>
            <person name="Olsen J.V."/>
            <person name="Vermeulen M."/>
            <person name="Santamaria A."/>
            <person name="Kumar C."/>
            <person name="Miller M.L."/>
            <person name="Jensen L.J."/>
            <person name="Gnad F."/>
            <person name="Cox J."/>
            <person name="Jensen T.S."/>
            <person name="Nigg E.A."/>
            <person name="Brunak S."/>
            <person name="Mann M."/>
        </authorList>
    </citation>
    <scope>PHOSPHORYLATION [LARGE SCALE ANALYSIS] AT SER-241</scope>
    <scope>IDENTIFICATION BY MASS SPECTROMETRY [LARGE SCALE ANALYSIS]</scope>
    <source>
        <tissue>Cervix carcinoma</tissue>
    </source>
</reference>
<reference key="32">
    <citation type="journal article" date="2011" name="BMC Syst. Biol.">
        <title>Initial characterization of the human central proteome.</title>
        <authorList>
            <person name="Burkard T.R."/>
            <person name="Planyavsky M."/>
            <person name="Kaupe I."/>
            <person name="Breitwieser F.P."/>
            <person name="Buerckstuemmer T."/>
            <person name="Bennett K.L."/>
            <person name="Superti-Furga G."/>
            <person name="Colinge J."/>
        </authorList>
    </citation>
    <scope>IDENTIFICATION BY MASS SPECTROMETRY [LARGE SCALE ANALYSIS]</scope>
</reference>
<reference key="33">
    <citation type="journal article" date="2011" name="Immunol. Lett.">
        <title>FCRL6 receptor: expression and associated proteins.</title>
        <authorList>
            <person name="Kulemzin S.V."/>
            <person name="Zamoshnikova A.Y."/>
            <person name="Yurchenko M.Y."/>
            <person name="Vitak N.Y."/>
            <person name="Najakshin A.M."/>
            <person name="Fayngerts S.A."/>
            <person name="Chikaev N.A."/>
            <person name="Reshetnikova E.S."/>
            <person name="Kashirina N.M."/>
            <person name="Peclo M.M."/>
            <person name="Rutkevich P.N."/>
            <person name="Shevelev A.Y."/>
            <person name="Yanushevskaya E.V."/>
            <person name="Baranov K.O."/>
            <person name="Mamonkin M."/>
            <person name="Vlasik T.N."/>
            <person name="Sidorenko S.P."/>
            <person name="Taranin A.V."/>
            <person name="Mechetina L.V."/>
        </authorList>
    </citation>
    <scope>INTERACTION WITH FCRL6</scope>
</reference>
<reference key="34">
    <citation type="journal article" date="2011" name="J. Cell Biol.">
        <title>SH3YL1 regulates dorsal ruffle formation by a novel phosphoinositide-binding domain.</title>
        <authorList>
            <person name="Hasegawa J."/>
            <person name="Tokuda E."/>
            <person name="Tenno T."/>
            <person name="Tsujita K."/>
            <person name="Sawai H."/>
            <person name="Hiroaki H."/>
            <person name="Takenawa T."/>
            <person name="Itoh T."/>
        </authorList>
    </citation>
    <scope>FUNCTION</scope>
    <scope>INTERACTION WITH SH3YL1</scope>
    <scope>MUTAGENESIS OF 140-PRO-LEU-141</scope>
</reference>
<reference key="35">
    <citation type="journal article" date="2013" name="Am. J. Hum. Genet.">
        <title>Exome sequencing identifies INPPL1 mutations as a cause of opsismodysplasia.</title>
        <authorList>
            <person name="Huber C."/>
            <person name="Faqeih E.A."/>
            <person name="Bartholdi D."/>
            <person name="Bole-Feysot C."/>
            <person name="Borochowitz Z."/>
            <person name="Cavalcanti D.P."/>
            <person name="Frigo A."/>
            <person name="Nitschke P."/>
            <person name="Roume J."/>
            <person name="Santos H.G."/>
            <person name="Shalev S.A."/>
            <person name="Superti-Furga A."/>
            <person name="Delezoide A.L."/>
            <person name="Le Merrer M."/>
            <person name="Munnich A."/>
            <person name="Cormier-Daire V."/>
        </authorList>
    </citation>
    <scope>FUNCTION</scope>
    <scope>VARIANTS OPSMD TRP-401; SER-659; CYS-688 AND ILE-722</scope>
</reference>
<reference key="36">
    <citation type="journal article" date="2013" name="J. Proteome Res.">
        <title>Toward a comprehensive characterization of a human cancer cell phosphoproteome.</title>
        <authorList>
            <person name="Zhou H."/>
            <person name="Di Palma S."/>
            <person name="Preisinger C."/>
            <person name="Peng M."/>
            <person name="Polat A.N."/>
            <person name="Heck A.J."/>
            <person name="Mohammed S."/>
        </authorList>
    </citation>
    <scope>PHOSPHORYLATION [LARGE SCALE ANALYSIS] AT SER-132; SER-352; TYR-886; SER-890; THR-958; SER-1131; TYR-1135; TYR-1162 AND SER-1257</scope>
    <scope>IDENTIFICATION BY MASS SPECTROMETRY [LARGE SCALE ANALYSIS]</scope>
    <source>
        <tissue>Cervix carcinoma</tissue>
        <tissue>Erythroleukemia</tissue>
    </source>
</reference>
<feature type="chain" id="PRO_0000302870" description="Phosphatidylinositol 3,4,5-trisphosphate 5-phosphatase 2">
    <location>
        <begin position="1"/>
        <end position="1258"/>
    </location>
</feature>
<feature type="domain" description="SH2" evidence="7">
    <location>
        <begin position="21"/>
        <end position="117"/>
    </location>
</feature>
<feature type="domain" description="SAM" evidence="6">
    <location>
        <begin position="1196"/>
        <end position="1258"/>
    </location>
</feature>
<feature type="region of interest" description="Disordered" evidence="8">
    <location>
        <begin position="119"/>
        <end position="180"/>
    </location>
</feature>
<feature type="region of interest" description="Disordered" evidence="8">
    <location>
        <begin position="897"/>
        <end position="1118"/>
    </location>
</feature>
<feature type="short sequence motif" description="SH3-binding">
    <location>
        <begin position="944"/>
        <end position="949"/>
    </location>
</feature>
<feature type="short sequence motif" description="NPXY motif">
    <location>
        <begin position="983"/>
        <end position="986"/>
    </location>
</feature>
<feature type="compositionally biased region" description="Basic and acidic residues" evidence="8">
    <location>
        <begin position="119"/>
        <end position="132"/>
    </location>
</feature>
<feature type="compositionally biased region" description="Polar residues" evidence="8">
    <location>
        <begin position="145"/>
        <end position="155"/>
    </location>
</feature>
<feature type="compositionally biased region" description="Pro residues" evidence="8">
    <location>
        <begin position="156"/>
        <end position="166"/>
    </location>
</feature>
<feature type="compositionally biased region" description="Pro residues" evidence="8">
    <location>
        <begin position="938"/>
        <end position="950"/>
    </location>
</feature>
<feature type="compositionally biased region" description="Basic and acidic residues" evidence="8">
    <location>
        <begin position="951"/>
        <end position="965"/>
    </location>
</feature>
<feature type="compositionally biased region" description="Pro residues" evidence="8">
    <location>
        <begin position="996"/>
        <end position="1007"/>
    </location>
</feature>
<feature type="compositionally biased region" description="Pro residues" evidence="8">
    <location>
        <begin position="1048"/>
        <end position="1059"/>
    </location>
</feature>
<feature type="compositionally biased region" description="Pro residues" evidence="8">
    <location>
        <begin position="1087"/>
        <end position="1104"/>
    </location>
</feature>
<feature type="modified residue" description="Phosphoserine" evidence="47">
    <location>
        <position position="132"/>
    </location>
</feature>
<feature type="modified residue" description="Phosphothreonine" evidence="45">
    <location>
        <position position="165"/>
    </location>
</feature>
<feature type="modified residue" description="Phosphoserine" evidence="45 46">
    <location>
        <position position="241"/>
    </location>
</feature>
<feature type="modified residue" description="Phosphoserine" evidence="47">
    <location>
        <position position="352"/>
    </location>
</feature>
<feature type="modified residue" description="Phosphotyrosine" evidence="47">
    <location>
        <position position="886"/>
    </location>
</feature>
<feature type="modified residue" description="Phosphoserine" evidence="47">
    <location>
        <position position="890"/>
    </location>
</feature>
<feature type="modified residue" description="Phosphothreonine" evidence="27 47">
    <location>
        <position position="958"/>
    </location>
</feature>
<feature type="modified residue" description="Phosphotyrosine; by SRC" evidence="12 15">
    <location>
        <position position="986"/>
    </location>
</feature>
<feature type="modified residue" description="Phosphoserine" evidence="47">
    <location>
        <position position="1131"/>
    </location>
</feature>
<feature type="modified residue" description="Phosphotyrosine" evidence="44 47">
    <location>
        <position position="1135"/>
    </location>
</feature>
<feature type="modified residue" description="Phosphotyrosine" evidence="13 47">
    <location>
        <position position="1162"/>
    </location>
</feature>
<feature type="modified residue" description="Phosphoserine" evidence="47">
    <location>
        <position position="1257"/>
    </location>
</feature>
<feature type="splice variant" id="VSP_027985" description="In isoform 2." evidence="38">
    <location>
        <begin position="1"/>
        <end position="242"/>
    </location>
</feature>
<feature type="sequence variant" id="VAR_069586" description="In OPSMD; dbSNP:rs397514511." evidence="32">
    <original>R</original>
    <variation>W</variation>
    <location>
        <position position="401"/>
    </location>
</feature>
<feature type="sequence variant" id="VAR_034980" description="In dbSNP:rs61749195." evidence="22">
    <original>L</original>
    <variation>I</variation>
    <location>
        <position position="632"/>
    </location>
</feature>
<feature type="sequence variant" id="VAR_069587" description="In OPSMD; dbSNP:rs397514510." evidence="32">
    <original>P</original>
    <variation>S</variation>
    <location>
        <position position="659"/>
    </location>
</feature>
<feature type="sequence variant" id="VAR_069588" description="In OPSMD." evidence="32">
    <original>W</original>
    <variation>C</variation>
    <location>
        <position position="688"/>
    </location>
</feature>
<feature type="sequence variant" id="VAR_034981" description="In dbSNP:rs116848359." evidence="22">
    <original>V</original>
    <variation>M</variation>
    <location>
        <position position="721"/>
    </location>
</feature>
<feature type="sequence variant" id="VAR_069589" description="In OPSMD; dbSNP:rs397514512." evidence="32">
    <original>F</original>
    <variation>I</variation>
    <location>
        <position position="722"/>
    </location>
</feature>
<feature type="sequence variant" id="VAR_034982" description="In dbSNP:rs70940821." evidence="22">
    <original>N</original>
    <variation>S</variation>
    <location>
        <position position="982"/>
    </location>
</feature>
<feature type="sequence variant" id="VAR_034983" description="In dbSNP:rs11548491." evidence="22">
    <original>A</original>
    <variation>G</variation>
    <location>
        <position position="1083"/>
    </location>
</feature>
<feature type="sequence variant" id="VAR_034984" description="In dbSNP:rs1049472." evidence="20 34 36">
    <original>A</original>
    <variation>G</variation>
    <location>
        <position position="1114"/>
    </location>
</feature>
<feature type="mutagenesis site" description="Abolishes interaction with p130Cas/BCAR1 and its ability to induce increased adhesion. Abolishes phosphorylation upon FCGR2A clustering." evidence="11 18">
    <original>R</original>
    <variation>G</variation>
    <location>
        <position position="47"/>
    </location>
</feature>
<feature type="mutagenesis site" description="Abolishes interaction with SH3YL1." evidence="31">
    <original>PL</original>
    <variation>AA</variation>
    <location>
        <begin position="140"/>
        <end position="141"/>
    </location>
</feature>
<feature type="mutagenesis site" description="Abolishes enzyme activity but not phosphorylation upon FCGR2A clustering." evidence="18">
    <original>D</original>
    <variation>A</variation>
    <location>
        <position position="607"/>
    </location>
</feature>
<feature type="mutagenesis site" description="Reduces PDGF-stimulated tyrosine phosphorylation and association with SHC1." evidence="27">
    <original>T</original>
    <variation>A</variation>
    <location>
        <position position="958"/>
    </location>
</feature>
<feature type="mutagenesis site" description="Inducer a strong reduction of phosphorylation upon re-plating on collagen I." evidence="15">
    <original>YY</original>
    <variation>FF</variation>
    <location>
        <begin position="986"/>
        <end position="987"/>
    </location>
</feature>
<feature type="sequence conflict" description="In Ref. 1; AAA96658." evidence="40" ref="1">
    <original>I</original>
    <variation>M</variation>
    <location>
        <position position="307"/>
    </location>
</feature>
<feature type="sequence conflict" description="In Ref. 1; AAA50503/AAA96658." evidence="40" ref="1">
    <original>R</original>
    <variation>A</variation>
    <location>
        <position position="1142"/>
    </location>
</feature>
<feature type="strand" evidence="49">
    <location>
        <begin position="21"/>
        <end position="23"/>
    </location>
</feature>
<feature type="helix" evidence="49">
    <location>
        <begin position="28"/>
        <end position="38"/>
    </location>
</feature>
<feature type="strand" evidence="49">
    <location>
        <begin position="41"/>
        <end position="48"/>
    </location>
</feature>
<feature type="strand" evidence="49">
    <location>
        <begin position="56"/>
        <end position="61"/>
    </location>
</feature>
<feature type="strand" evidence="49">
    <location>
        <begin position="66"/>
        <end position="72"/>
    </location>
</feature>
<feature type="strand" evidence="49">
    <location>
        <begin position="75"/>
        <end position="77"/>
    </location>
</feature>
<feature type="strand" evidence="49">
    <location>
        <begin position="79"/>
        <end position="81"/>
    </location>
</feature>
<feature type="strand" evidence="49">
    <location>
        <begin position="85"/>
        <end position="87"/>
    </location>
</feature>
<feature type="strand" evidence="49">
    <location>
        <begin position="91"/>
        <end position="94"/>
    </location>
</feature>
<feature type="helix" evidence="49">
    <location>
        <begin position="95"/>
        <end position="102"/>
    </location>
</feature>
<feature type="strand" evidence="53">
    <location>
        <begin position="422"/>
        <end position="432"/>
    </location>
</feature>
<feature type="helix" evidence="53">
    <location>
        <begin position="443"/>
        <end position="446"/>
    </location>
</feature>
<feature type="strand" evidence="53">
    <location>
        <begin position="450"/>
        <end position="453"/>
    </location>
</feature>
<feature type="turn" evidence="53">
    <location>
        <begin position="458"/>
        <end position="460"/>
    </location>
</feature>
<feature type="strand" evidence="53">
    <location>
        <begin position="465"/>
        <end position="473"/>
    </location>
</feature>
<feature type="helix" evidence="53">
    <location>
        <begin position="478"/>
        <end position="493"/>
    </location>
</feature>
<feature type="strand" evidence="53">
    <location>
        <begin position="498"/>
        <end position="505"/>
    </location>
</feature>
<feature type="strand" evidence="53">
    <location>
        <begin position="508"/>
        <end position="514"/>
    </location>
</feature>
<feature type="helix" evidence="53">
    <location>
        <begin position="516"/>
        <end position="521"/>
    </location>
</feature>
<feature type="strand" evidence="53">
    <location>
        <begin position="522"/>
        <end position="531"/>
    </location>
</feature>
<feature type="strand" evidence="53">
    <location>
        <begin position="538"/>
        <end position="550"/>
    </location>
</feature>
<feature type="strand" evidence="53">
    <location>
        <begin position="553"/>
        <end position="561"/>
    </location>
</feature>
<feature type="helix" evidence="53">
    <location>
        <begin position="569"/>
        <end position="582"/>
    </location>
</feature>
<feature type="helix" evidence="51">
    <location>
        <begin position="588"/>
        <end position="592"/>
    </location>
</feature>
<feature type="helix" evidence="53">
    <location>
        <begin position="595"/>
        <end position="597"/>
    </location>
</feature>
<feature type="strand" evidence="53">
    <location>
        <begin position="599"/>
        <end position="607"/>
    </location>
</feature>
<feature type="strand" evidence="53">
    <location>
        <begin position="612"/>
        <end position="614"/>
    </location>
</feature>
<feature type="helix" evidence="53">
    <location>
        <begin position="616"/>
        <end position="624"/>
    </location>
</feature>
<feature type="helix" evidence="53">
    <location>
        <begin position="629"/>
        <end position="632"/>
    </location>
</feature>
<feature type="helix" evidence="53">
    <location>
        <begin position="636"/>
        <end position="642"/>
    </location>
</feature>
<feature type="strand" evidence="53">
    <location>
        <begin position="645"/>
        <end position="647"/>
    </location>
</feature>
<feature type="strand" evidence="50">
    <location>
        <begin position="675"/>
        <end position="677"/>
    </location>
</feature>
<feature type="strand" evidence="50">
    <location>
        <begin position="680"/>
        <end position="682"/>
    </location>
</feature>
<feature type="strand" evidence="53">
    <location>
        <begin position="690"/>
        <end position="696"/>
    </location>
</feature>
<feature type="strand" evidence="53">
    <location>
        <begin position="702"/>
        <end position="709"/>
    </location>
</feature>
<feature type="strand" evidence="53">
    <location>
        <begin position="715"/>
        <end position="718"/>
    </location>
</feature>
<feature type="strand" evidence="53">
    <location>
        <begin position="721"/>
        <end position="728"/>
    </location>
</feature>
<feature type="turn" evidence="52">
    <location>
        <begin position="732"/>
        <end position="734"/>
    </location>
</feature>
<feature type="strand" evidence="53">
    <location>
        <begin position="747"/>
        <end position="758"/>
    </location>
</feature>
<feature type="strand" evidence="53">
    <location>
        <begin position="765"/>
        <end position="770"/>
    </location>
</feature>
<feature type="strand" evidence="52">
    <location>
        <begin position="774"/>
        <end position="776"/>
    </location>
</feature>
<feature type="strand" evidence="53">
    <location>
        <begin position="784"/>
        <end position="787"/>
    </location>
</feature>
<feature type="strand" evidence="53">
    <location>
        <begin position="793"/>
        <end position="799"/>
    </location>
</feature>
<feature type="helix" evidence="53">
    <location>
        <begin position="800"/>
        <end position="802"/>
    </location>
</feature>
<feature type="helix" evidence="53">
    <location>
        <begin position="813"/>
        <end position="816"/>
    </location>
</feature>
<feature type="strand" evidence="53">
    <location>
        <begin position="820"/>
        <end position="827"/>
    </location>
</feature>
<feature type="turn" evidence="53">
    <location>
        <begin position="828"/>
        <end position="830"/>
    </location>
</feature>
<feature type="strand" evidence="53">
    <location>
        <begin position="833"/>
        <end position="841"/>
    </location>
</feature>
<feature type="turn" evidence="53">
    <location>
        <begin position="842"/>
        <end position="844"/>
    </location>
</feature>
<feature type="strand" evidence="52">
    <location>
        <begin position="845"/>
        <end position="848"/>
    </location>
</feature>
<feature type="strand" evidence="53">
    <location>
        <begin position="850"/>
        <end position="858"/>
    </location>
</feature>
<feature type="strand" evidence="53">
    <location>
        <begin position="861"/>
        <end position="873"/>
    </location>
</feature>
<feature type="helix" evidence="48">
    <location>
        <begin position="1202"/>
        <end position="1206"/>
    </location>
</feature>
<feature type="turn" evidence="48">
    <location>
        <begin position="1207"/>
        <end position="1209"/>
    </location>
</feature>
<feature type="helix" evidence="48">
    <location>
        <begin position="1211"/>
        <end position="1213"/>
    </location>
</feature>
<feature type="helix" evidence="48">
    <location>
        <begin position="1214"/>
        <end position="1218"/>
    </location>
</feature>
<feature type="turn" evidence="48">
    <location>
        <begin position="1219"/>
        <end position="1221"/>
    </location>
</feature>
<feature type="helix" evidence="48">
    <location>
        <begin position="1225"/>
        <end position="1228"/>
    </location>
</feature>
<feature type="helix" evidence="48">
    <location>
        <begin position="1233"/>
        <end position="1238"/>
    </location>
</feature>
<feature type="helix" evidence="48">
    <location>
        <begin position="1244"/>
        <end position="1256"/>
    </location>
</feature>
<evidence type="ECO:0000250" key="1">
    <source>
        <dbReference type="UniProtKB" id="D7PF45"/>
    </source>
</evidence>
<evidence type="ECO:0000250" key="2">
    <source>
        <dbReference type="UniProtKB" id="F1PNY0"/>
    </source>
</evidence>
<evidence type="ECO:0000250" key="3">
    <source>
        <dbReference type="UniProtKB" id="Q6P549"/>
    </source>
</evidence>
<evidence type="ECO:0000250" key="4">
    <source>
        <dbReference type="UniProtKB" id="Q9ES52"/>
    </source>
</evidence>
<evidence type="ECO:0000250" key="5">
    <source>
        <dbReference type="UniProtKB" id="Q9WVR3"/>
    </source>
</evidence>
<evidence type="ECO:0000255" key="6">
    <source>
        <dbReference type="PROSITE-ProRule" id="PRU00184"/>
    </source>
</evidence>
<evidence type="ECO:0000255" key="7">
    <source>
        <dbReference type="PROSITE-ProRule" id="PRU00191"/>
    </source>
</evidence>
<evidence type="ECO:0000256" key="8">
    <source>
        <dbReference type="SAM" id="MobiDB-lite"/>
    </source>
</evidence>
<evidence type="ECO:0000269" key="9">
    <source>
    </source>
</evidence>
<evidence type="ECO:0000269" key="10">
    <source>
    </source>
</evidence>
<evidence type="ECO:0000269" key="11">
    <source>
    </source>
</evidence>
<evidence type="ECO:0000269" key="12">
    <source>
    </source>
</evidence>
<evidence type="ECO:0000269" key="13">
    <source>
    </source>
</evidence>
<evidence type="ECO:0000269" key="14">
    <source>
    </source>
</evidence>
<evidence type="ECO:0000269" key="15">
    <source>
    </source>
</evidence>
<evidence type="ECO:0000269" key="16">
    <source>
    </source>
</evidence>
<evidence type="ECO:0000269" key="17">
    <source>
    </source>
</evidence>
<evidence type="ECO:0000269" key="18">
    <source>
    </source>
</evidence>
<evidence type="ECO:0000269" key="19">
    <source>
    </source>
</evidence>
<evidence type="ECO:0000269" key="20">
    <source>
    </source>
</evidence>
<evidence type="ECO:0000269" key="21">
    <source>
    </source>
</evidence>
<evidence type="ECO:0000269" key="22">
    <source>
    </source>
</evidence>
<evidence type="ECO:0000269" key="23">
    <source>
    </source>
</evidence>
<evidence type="ECO:0000269" key="24">
    <source>
    </source>
</evidence>
<evidence type="ECO:0000269" key="25">
    <source>
    </source>
</evidence>
<evidence type="ECO:0000269" key="26">
    <source>
    </source>
</evidence>
<evidence type="ECO:0000269" key="27">
    <source>
    </source>
</evidence>
<evidence type="ECO:0000269" key="28">
    <source>
    </source>
</evidence>
<evidence type="ECO:0000269" key="29">
    <source>
    </source>
</evidence>
<evidence type="ECO:0000269" key="30">
    <source>
    </source>
</evidence>
<evidence type="ECO:0000269" key="31">
    <source>
    </source>
</evidence>
<evidence type="ECO:0000269" key="32">
    <source>
    </source>
</evidence>
<evidence type="ECO:0000269" key="33">
    <source>
    </source>
</evidence>
<evidence type="ECO:0000269" key="34">
    <source>
    </source>
</evidence>
<evidence type="ECO:0000269" key="35">
    <source>
    </source>
</evidence>
<evidence type="ECO:0000269" key="36">
    <source ref="4"/>
</evidence>
<evidence type="ECO:0000303" key="37">
    <source>
    </source>
</evidence>
<evidence type="ECO:0000303" key="38">
    <source>
    </source>
</evidence>
<evidence type="ECO:0000303" key="39">
    <source>
    </source>
</evidence>
<evidence type="ECO:0000305" key="40"/>
<evidence type="ECO:0000305" key="41">
    <source>
    </source>
</evidence>
<evidence type="ECO:0000305" key="42">
    <source>
    </source>
</evidence>
<evidence type="ECO:0000312" key="43">
    <source>
        <dbReference type="HGNC" id="HGNC:6080"/>
    </source>
</evidence>
<evidence type="ECO:0007744" key="44">
    <source>
    </source>
</evidence>
<evidence type="ECO:0007744" key="45">
    <source>
    </source>
</evidence>
<evidence type="ECO:0007744" key="46">
    <source>
    </source>
</evidence>
<evidence type="ECO:0007744" key="47">
    <source>
    </source>
</evidence>
<evidence type="ECO:0007829" key="48">
    <source>
        <dbReference type="PDB" id="2K4P"/>
    </source>
</evidence>
<evidence type="ECO:0007829" key="49">
    <source>
        <dbReference type="PDB" id="2MK2"/>
    </source>
</evidence>
<evidence type="ECO:0007829" key="50">
    <source>
        <dbReference type="PDB" id="4A9C"/>
    </source>
</evidence>
<evidence type="ECO:0007829" key="51">
    <source>
        <dbReference type="PDB" id="5OKM"/>
    </source>
</evidence>
<evidence type="ECO:0007829" key="52">
    <source>
        <dbReference type="PDB" id="5OKO"/>
    </source>
</evidence>
<evidence type="ECO:0007829" key="53">
    <source>
        <dbReference type="PDB" id="5OKP"/>
    </source>
</evidence>
<name>SHIP2_HUMAN</name>